<name>PAND_ECOSE</name>
<protein>
    <recommendedName>
        <fullName evidence="1">Aspartate 1-decarboxylase</fullName>
        <ecNumber evidence="1">4.1.1.11</ecNumber>
    </recommendedName>
    <alternativeName>
        <fullName evidence="1">Aspartate alpha-decarboxylase</fullName>
    </alternativeName>
    <component>
        <recommendedName>
            <fullName evidence="1">Aspartate 1-decarboxylase beta chain</fullName>
        </recommendedName>
    </component>
    <component>
        <recommendedName>
            <fullName evidence="1">Aspartate 1-decarboxylase alpha chain</fullName>
        </recommendedName>
    </component>
</protein>
<reference key="1">
    <citation type="journal article" date="2008" name="DNA Res.">
        <title>Complete genome sequence and comparative analysis of the wild-type commensal Escherichia coli strain SE11 isolated from a healthy adult.</title>
        <authorList>
            <person name="Oshima K."/>
            <person name="Toh H."/>
            <person name="Ogura Y."/>
            <person name="Sasamoto H."/>
            <person name="Morita H."/>
            <person name="Park S.-H."/>
            <person name="Ooka T."/>
            <person name="Iyoda S."/>
            <person name="Taylor T.D."/>
            <person name="Hayashi T."/>
            <person name="Itoh K."/>
            <person name="Hattori M."/>
        </authorList>
    </citation>
    <scope>NUCLEOTIDE SEQUENCE [LARGE SCALE GENOMIC DNA]</scope>
    <source>
        <strain>SE11</strain>
    </source>
</reference>
<sequence length="126" mass="13834">MIRTMLQGKLHRVKVTHADLHYEGSCAIDQDFLDAAGILENEAIDIWNVTNGKRFSTYAIAAERGSRIISVNGAAAHCASVGDIVIIASFVTMPDEEARTWRPNVAYFEGDNEMKRTAKAIPVQVA</sequence>
<accession>B6HZA6</accession>
<organism>
    <name type="scientific">Escherichia coli (strain SE11)</name>
    <dbReference type="NCBI Taxonomy" id="409438"/>
    <lineage>
        <taxon>Bacteria</taxon>
        <taxon>Pseudomonadati</taxon>
        <taxon>Pseudomonadota</taxon>
        <taxon>Gammaproteobacteria</taxon>
        <taxon>Enterobacterales</taxon>
        <taxon>Enterobacteriaceae</taxon>
        <taxon>Escherichia</taxon>
    </lineage>
</organism>
<comment type="function">
    <text evidence="1">Catalyzes the pyruvoyl-dependent decarboxylation of aspartate to produce beta-alanine.</text>
</comment>
<comment type="catalytic activity">
    <reaction evidence="1">
        <text>L-aspartate + H(+) = beta-alanine + CO2</text>
        <dbReference type="Rhea" id="RHEA:19497"/>
        <dbReference type="ChEBI" id="CHEBI:15378"/>
        <dbReference type="ChEBI" id="CHEBI:16526"/>
        <dbReference type="ChEBI" id="CHEBI:29991"/>
        <dbReference type="ChEBI" id="CHEBI:57966"/>
        <dbReference type="EC" id="4.1.1.11"/>
    </reaction>
</comment>
<comment type="cofactor">
    <cofactor evidence="1">
        <name>pyruvate</name>
        <dbReference type="ChEBI" id="CHEBI:15361"/>
    </cofactor>
    <text evidence="1">Binds 1 pyruvoyl group covalently per subunit.</text>
</comment>
<comment type="pathway">
    <text evidence="1">Cofactor biosynthesis; (R)-pantothenate biosynthesis; beta-alanine from L-aspartate: step 1/1.</text>
</comment>
<comment type="subunit">
    <text evidence="1">Heterooctamer of four alpha and four beta subunits.</text>
</comment>
<comment type="subcellular location">
    <subcellularLocation>
        <location evidence="1">Cytoplasm</location>
    </subcellularLocation>
</comment>
<comment type="PTM">
    <text evidence="1">Is synthesized initially as an inactive proenzyme, which is activated by self-cleavage at a specific serine bond to produce a beta-subunit with a hydroxyl group at its C-terminus and an alpha-subunit with a pyruvoyl group at its N-terminus.</text>
</comment>
<comment type="similarity">
    <text evidence="1">Belongs to the PanD family.</text>
</comment>
<feature type="chain" id="PRO_1000191990" description="Aspartate 1-decarboxylase beta chain" evidence="1">
    <location>
        <begin position="1"/>
        <end position="24"/>
    </location>
</feature>
<feature type="chain" id="PRO_1000191991" description="Aspartate 1-decarboxylase alpha chain" evidence="1">
    <location>
        <begin position="25"/>
        <end position="126"/>
    </location>
</feature>
<feature type="active site" description="Schiff-base intermediate with substrate; via pyruvic acid" evidence="1">
    <location>
        <position position="25"/>
    </location>
</feature>
<feature type="active site" description="Proton donor" evidence="1">
    <location>
        <position position="58"/>
    </location>
</feature>
<feature type="binding site" evidence="1">
    <location>
        <position position="57"/>
    </location>
    <ligand>
        <name>substrate</name>
    </ligand>
</feature>
<feature type="binding site" evidence="1">
    <location>
        <begin position="73"/>
        <end position="75"/>
    </location>
    <ligand>
        <name>substrate</name>
    </ligand>
</feature>
<feature type="modified residue" description="Pyruvic acid (Ser)" evidence="1">
    <location>
        <position position="25"/>
    </location>
</feature>
<dbReference type="EC" id="4.1.1.11" evidence="1"/>
<dbReference type="EMBL" id="AP009240">
    <property type="protein sequence ID" value="BAG75655.1"/>
    <property type="molecule type" value="Genomic_DNA"/>
</dbReference>
<dbReference type="RefSeq" id="WP_000621515.1">
    <property type="nucleotide sequence ID" value="NC_011415.1"/>
</dbReference>
<dbReference type="SMR" id="B6HZA6"/>
<dbReference type="GeneID" id="93777305"/>
<dbReference type="KEGG" id="ecy:ECSE_0131"/>
<dbReference type="HOGENOM" id="CLU_115305_2_1_6"/>
<dbReference type="UniPathway" id="UPA00028">
    <property type="reaction ID" value="UER00002"/>
</dbReference>
<dbReference type="Proteomes" id="UP000008199">
    <property type="component" value="Chromosome"/>
</dbReference>
<dbReference type="GO" id="GO:0005829">
    <property type="term" value="C:cytosol"/>
    <property type="evidence" value="ECO:0007669"/>
    <property type="project" value="TreeGrafter"/>
</dbReference>
<dbReference type="GO" id="GO:0004068">
    <property type="term" value="F:aspartate 1-decarboxylase activity"/>
    <property type="evidence" value="ECO:0007669"/>
    <property type="project" value="UniProtKB-UniRule"/>
</dbReference>
<dbReference type="GO" id="GO:0006523">
    <property type="term" value="P:alanine biosynthetic process"/>
    <property type="evidence" value="ECO:0007669"/>
    <property type="project" value="InterPro"/>
</dbReference>
<dbReference type="GO" id="GO:0015940">
    <property type="term" value="P:pantothenate biosynthetic process"/>
    <property type="evidence" value="ECO:0007669"/>
    <property type="project" value="UniProtKB-UniRule"/>
</dbReference>
<dbReference type="CDD" id="cd06919">
    <property type="entry name" value="Asp_decarbox"/>
    <property type="match status" value="1"/>
</dbReference>
<dbReference type="FunFam" id="2.40.40.20:FF:000004">
    <property type="entry name" value="Aspartate 1-decarboxylase"/>
    <property type="match status" value="1"/>
</dbReference>
<dbReference type="Gene3D" id="2.40.40.20">
    <property type="match status" value="1"/>
</dbReference>
<dbReference type="HAMAP" id="MF_00446">
    <property type="entry name" value="PanD"/>
    <property type="match status" value="1"/>
</dbReference>
<dbReference type="InterPro" id="IPR009010">
    <property type="entry name" value="Asp_de-COase-like_dom_sf"/>
</dbReference>
<dbReference type="InterPro" id="IPR003190">
    <property type="entry name" value="Asp_decarbox"/>
</dbReference>
<dbReference type="NCBIfam" id="TIGR00223">
    <property type="entry name" value="panD"/>
    <property type="match status" value="1"/>
</dbReference>
<dbReference type="PANTHER" id="PTHR21012">
    <property type="entry name" value="ASPARTATE 1-DECARBOXYLASE"/>
    <property type="match status" value="1"/>
</dbReference>
<dbReference type="PANTHER" id="PTHR21012:SF0">
    <property type="entry name" value="ASPARTATE 1-DECARBOXYLASE"/>
    <property type="match status" value="1"/>
</dbReference>
<dbReference type="Pfam" id="PF02261">
    <property type="entry name" value="Asp_decarbox"/>
    <property type="match status" value="1"/>
</dbReference>
<dbReference type="PIRSF" id="PIRSF006246">
    <property type="entry name" value="Asp_decarbox"/>
    <property type="match status" value="1"/>
</dbReference>
<dbReference type="SUPFAM" id="SSF50692">
    <property type="entry name" value="ADC-like"/>
    <property type="match status" value="1"/>
</dbReference>
<gene>
    <name evidence="1" type="primary">panD</name>
    <name type="ordered locus">ECSE_0131</name>
</gene>
<evidence type="ECO:0000255" key="1">
    <source>
        <dbReference type="HAMAP-Rule" id="MF_00446"/>
    </source>
</evidence>
<keyword id="KW-0068">Autocatalytic cleavage</keyword>
<keyword id="KW-0963">Cytoplasm</keyword>
<keyword id="KW-0210">Decarboxylase</keyword>
<keyword id="KW-0456">Lyase</keyword>
<keyword id="KW-0566">Pantothenate biosynthesis</keyword>
<keyword id="KW-0670">Pyruvate</keyword>
<keyword id="KW-0704">Schiff base</keyword>
<keyword id="KW-0865">Zymogen</keyword>
<proteinExistence type="inferred from homology"/>